<gene>
    <name evidence="1" type="primary">hemE</name>
    <name type="ordered locus">BruAb1_2041</name>
</gene>
<evidence type="ECO:0000255" key="1">
    <source>
        <dbReference type="HAMAP-Rule" id="MF_00218"/>
    </source>
</evidence>
<name>DCUP_BRUAB</name>
<protein>
    <recommendedName>
        <fullName evidence="1">Uroporphyrinogen decarboxylase</fullName>
        <shortName evidence="1">UPD</shortName>
        <shortName evidence="1">URO-D</shortName>
        <ecNumber evidence="1">4.1.1.37</ecNumber>
    </recommendedName>
</protein>
<reference key="1">
    <citation type="journal article" date="2005" name="J. Bacteriol.">
        <title>Completion of the genome sequence of Brucella abortus and comparison to the highly similar genomes of Brucella melitensis and Brucella suis.</title>
        <authorList>
            <person name="Halling S.M."/>
            <person name="Peterson-Burch B.D."/>
            <person name="Bricker B.J."/>
            <person name="Zuerner R.L."/>
            <person name="Qing Z."/>
            <person name="Li L.-L."/>
            <person name="Kapur V."/>
            <person name="Alt D.P."/>
            <person name="Olsen S.C."/>
        </authorList>
    </citation>
    <scope>NUCLEOTIDE SEQUENCE [LARGE SCALE GENOMIC DNA]</scope>
    <source>
        <strain>9-941</strain>
    </source>
</reference>
<sequence length="341" mass="37831">MNRKVLKVIDGETVFPPPIWMMRQAGRYLPEYRETRKKAGSFLDLCYSPDLAVEVTLQPIRRFGFDAAILFSDILVVPHALGRDLRFEEGKGPLMTPIDADEIFWLETEGVAKRLEPVYETVRLVREQLPDETTLLGFCGAPWTVATYMIAGHGTPDQAPARLFAYRFPEAFEKLLNDLADVSAEYLIEQLGAGADAVQIFDSWSGVLDEDCFERFCIRPVARIVQKVRAVYPQARIIGFPKGAGMLYAGYREKTGVDMLGLDWSVPLSFAALLQEEGAVQGNLDPLRVVAGGNALDEGVDAILERMGQGPLVFNLGHGITPQAPIENVQRMIDRVRGGKS</sequence>
<dbReference type="EC" id="4.1.1.37" evidence="1"/>
<dbReference type="EMBL" id="AE017223">
    <property type="protein sequence ID" value="AAX75342.1"/>
    <property type="molecule type" value="Genomic_DNA"/>
</dbReference>
<dbReference type="RefSeq" id="WP_002965130.1">
    <property type="nucleotide sequence ID" value="NC_006932.1"/>
</dbReference>
<dbReference type="SMR" id="Q57AJ2"/>
<dbReference type="EnsemblBacteria" id="AAX75342">
    <property type="protein sequence ID" value="AAX75342"/>
    <property type="gene ID" value="BruAb1_2041"/>
</dbReference>
<dbReference type="GeneID" id="93017623"/>
<dbReference type="KEGG" id="bmb:BruAb1_2041"/>
<dbReference type="HOGENOM" id="CLU_040933_0_0_5"/>
<dbReference type="UniPathway" id="UPA00251">
    <property type="reaction ID" value="UER00321"/>
</dbReference>
<dbReference type="Proteomes" id="UP000000540">
    <property type="component" value="Chromosome I"/>
</dbReference>
<dbReference type="GO" id="GO:0005829">
    <property type="term" value="C:cytosol"/>
    <property type="evidence" value="ECO:0007669"/>
    <property type="project" value="TreeGrafter"/>
</dbReference>
<dbReference type="GO" id="GO:0004853">
    <property type="term" value="F:uroporphyrinogen decarboxylase activity"/>
    <property type="evidence" value="ECO:0007669"/>
    <property type="project" value="UniProtKB-UniRule"/>
</dbReference>
<dbReference type="GO" id="GO:0019353">
    <property type="term" value="P:protoporphyrinogen IX biosynthetic process from glutamate"/>
    <property type="evidence" value="ECO:0007669"/>
    <property type="project" value="TreeGrafter"/>
</dbReference>
<dbReference type="CDD" id="cd00717">
    <property type="entry name" value="URO-D"/>
    <property type="match status" value="1"/>
</dbReference>
<dbReference type="FunFam" id="3.20.20.210:FF:000007">
    <property type="entry name" value="Uroporphyrinogen decarboxylase"/>
    <property type="match status" value="1"/>
</dbReference>
<dbReference type="Gene3D" id="3.20.20.210">
    <property type="match status" value="1"/>
</dbReference>
<dbReference type="HAMAP" id="MF_00218">
    <property type="entry name" value="URO_D"/>
    <property type="match status" value="1"/>
</dbReference>
<dbReference type="InterPro" id="IPR038071">
    <property type="entry name" value="UROD/MetE-like_sf"/>
</dbReference>
<dbReference type="InterPro" id="IPR006361">
    <property type="entry name" value="Uroporphyrinogen_deCO2ase_HemE"/>
</dbReference>
<dbReference type="InterPro" id="IPR000257">
    <property type="entry name" value="Uroporphyrinogen_deCOase"/>
</dbReference>
<dbReference type="NCBIfam" id="TIGR01464">
    <property type="entry name" value="hemE"/>
    <property type="match status" value="1"/>
</dbReference>
<dbReference type="PANTHER" id="PTHR21091">
    <property type="entry name" value="METHYLTETRAHYDROFOLATE:HOMOCYSTEINE METHYLTRANSFERASE RELATED"/>
    <property type="match status" value="1"/>
</dbReference>
<dbReference type="PANTHER" id="PTHR21091:SF169">
    <property type="entry name" value="UROPORPHYRINOGEN DECARBOXYLASE"/>
    <property type="match status" value="1"/>
</dbReference>
<dbReference type="Pfam" id="PF01208">
    <property type="entry name" value="URO-D"/>
    <property type="match status" value="1"/>
</dbReference>
<dbReference type="SUPFAM" id="SSF51726">
    <property type="entry name" value="UROD/MetE-like"/>
    <property type="match status" value="1"/>
</dbReference>
<dbReference type="PROSITE" id="PS00906">
    <property type="entry name" value="UROD_1"/>
    <property type="match status" value="1"/>
</dbReference>
<dbReference type="PROSITE" id="PS00907">
    <property type="entry name" value="UROD_2"/>
    <property type="match status" value="1"/>
</dbReference>
<accession>Q57AJ2</accession>
<keyword id="KW-0963">Cytoplasm</keyword>
<keyword id="KW-0210">Decarboxylase</keyword>
<keyword id="KW-0456">Lyase</keyword>
<keyword id="KW-0627">Porphyrin biosynthesis</keyword>
<proteinExistence type="inferred from homology"/>
<feature type="chain" id="PRO_1000023877" description="Uroporphyrinogen decarboxylase">
    <location>
        <begin position="1"/>
        <end position="341"/>
    </location>
</feature>
<feature type="binding site" evidence="1">
    <location>
        <begin position="23"/>
        <end position="27"/>
    </location>
    <ligand>
        <name>substrate</name>
    </ligand>
</feature>
<feature type="binding site" evidence="1">
    <location>
        <position position="73"/>
    </location>
    <ligand>
        <name>substrate</name>
    </ligand>
</feature>
<feature type="binding site" evidence="1">
    <location>
        <position position="148"/>
    </location>
    <ligand>
        <name>substrate</name>
    </ligand>
</feature>
<feature type="binding site" evidence="1">
    <location>
        <position position="203"/>
    </location>
    <ligand>
        <name>substrate</name>
    </ligand>
</feature>
<feature type="binding site" evidence="1">
    <location>
        <position position="318"/>
    </location>
    <ligand>
        <name>substrate</name>
    </ligand>
</feature>
<feature type="site" description="Transition state stabilizer" evidence="1">
    <location>
        <position position="73"/>
    </location>
</feature>
<comment type="function">
    <text evidence="1">Catalyzes the decarboxylation of four acetate groups of uroporphyrinogen-III to yield coproporphyrinogen-III.</text>
</comment>
<comment type="catalytic activity">
    <reaction evidence="1">
        <text>uroporphyrinogen III + 4 H(+) = coproporphyrinogen III + 4 CO2</text>
        <dbReference type="Rhea" id="RHEA:19865"/>
        <dbReference type="ChEBI" id="CHEBI:15378"/>
        <dbReference type="ChEBI" id="CHEBI:16526"/>
        <dbReference type="ChEBI" id="CHEBI:57308"/>
        <dbReference type="ChEBI" id="CHEBI:57309"/>
        <dbReference type="EC" id="4.1.1.37"/>
    </reaction>
</comment>
<comment type="pathway">
    <text evidence="1">Porphyrin-containing compound metabolism; protoporphyrin-IX biosynthesis; coproporphyrinogen-III from 5-aminolevulinate: step 4/4.</text>
</comment>
<comment type="subunit">
    <text evidence="1">Homodimer.</text>
</comment>
<comment type="subcellular location">
    <subcellularLocation>
        <location evidence="1">Cytoplasm</location>
    </subcellularLocation>
</comment>
<comment type="similarity">
    <text evidence="1">Belongs to the uroporphyrinogen decarboxylase family.</text>
</comment>
<organism>
    <name type="scientific">Brucella abortus biovar 1 (strain 9-941)</name>
    <dbReference type="NCBI Taxonomy" id="262698"/>
    <lineage>
        <taxon>Bacteria</taxon>
        <taxon>Pseudomonadati</taxon>
        <taxon>Pseudomonadota</taxon>
        <taxon>Alphaproteobacteria</taxon>
        <taxon>Hyphomicrobiales</taxon>
        <taxon>Brucellaceae</taxon>
        <taxon>Brucella/Ochrobactrum group</taxon>
        <taxon>Brucella</taxon>
    </lineage>
</organism>